<gene>
    <name type="primary">clpB</name>
    <name type="ordered locus">TDE_2327</name>
</gene>
<organism>
    <name type="scientific">Treponema denticola (strain ATCC 35405 / DSM 14222 / CIP 103919 / JCM 8153 / KCTC 15104)</name>
    <dbReference type="NCBI Taxonomy" id="243275"/>
    <lineage>
        <taxon>Bacteria</taxon>
        <taxon>Pseudomonadati</taxon>
        <taxon>Spirochaetota</taxon>
        <taxon>Spirochaetia</taxon>
        <taxon>Spirochaetales</taxon>
        <taxon>Treponemataceae</taxon>
        <taxon>Treponema</taxon>
    </lineage>
</organism>
<sequence length="859" mass="96644">MNIDKYTVKASEAVQEASSLAQRDDHSQVESEHLLYVLLEQEDGIVPPLVEKIGVSPESLLDDLDKMLDRKPRVTGQSAQTYISPLLAKVFANAEGYADKLKDEYVSTEHLLLALSESKDETGELLRSRGINLKNLLSALKEIRGNNRVTSENPESTFRSLEKFCRDLTQLAKNEKIDPVIGRDEEIRRVMQVLSRRTKNNPVLIGEPGVGKTAIVEGLARRIVSGDVPDSLKGKRLLSLDLGALVAGAKFRGEFEERLKAVISEVQKSEGRVILFIDELHTLVGAGASEGSMDASNLLKPALARGELRAIGATTLNEYRKYIEKDAALERRFQQVYCPEPTVEDTIAILRGLQEKYEVHHGVRIRDEALIAAAVLSNRYITNRFLPDKAIDLVDEAASRLKMEIESQPVELDQVERKILQLNIEKVSIGKENDTASKERLLKLEEELAELSSKRNAMQAQWQNEKARINESRKYKEELEQLRIEETKYSREGNLNKAAELKYGKIPELEKKIAAVTAELEKKAGQQGQLLREEVCEEDIARIVSMWTGIPVAKMLASEMQKFLQLEKVLQARVVGQDEAVRVVSDAIRRNKAGLSDMNRPLGSFLCIGPTGVGKTELARTLADFLFNDEKALTRIDMSEYMEKHSVSRLIGAPPGYVGYDEGGQLTEAVRRRPYSVILFDEIEKAHQDVFNVFLQILDDGRLTDGQGRVVDFKNTIIIMTSNIGSEYILTAKDMGSIKEEINQILRDNFRPEFLNRIDEILTFNRLEKEHIRKIVDIQLRSVAERLQARRLGLKVSDKAKDFLADIGYDPMFGARPLKRAIQAELENKLAREVLEGKFPEGSTILVDKGENSLIFKKG</sequence>
<evidence type="ECO:0000250" key="1"/>
<evidence type="ECO:0000255" key="2">
    <source>
        <dbReference type="PROSITE-ProRule" id="PRU01251"/>
    </source>
</evidence>
<evidence type="ECO:0000305" key="3"/>
<keyword id="KW-0067">ATP-binding</keyword>
<keyword id="KW-0143">Chaperone</keyword>
<keyword id="KW-0175">Coiled coil</keyword>
<keyword id="KW-0963">Cytoplasm</keyword>
<keyword id="KW-0547">Nucleotide-binding</keyword>
<keyword id="KW-1185">Reference proteome</keyword>
<keyword id="KW-0677">Repeat</keyword>
<keyword id="KW-0346">Stress response</keyword>
<dbReference type="EMBL" id="AE017226">
    <property type="protein sequence ID" value="AAS12846.1"/>
    <property type="molecule type" value="Genomic_DNA"/>
</dbReference>
<dbReference type="RefSeq" id="NP_972927.1">
    <property type="nucleotide sequence ID" value="NC_002967.9"/>
</dbReference>
<dbReference type="RefSeq" id="WP_002680241.1">
    <property type="nucleotide sequence ID" value="NC_002967.9"/>
</dbReference>
<dbReference type="SMR" id="Q73K92"/>
<dbReference type="STRING" id="243275.TDE_2327"/>
<dbReference type="PaxDb" id="243275-TDE_2327"/>
<dbReference type="GeneID" id="2739422"/>
<dbReference type="KEGG" id="tde:TDE_2327"/>
<dbReference type="PATRIC" id="fig|243275.7.peg.2196"/>
<dbReference type="eggNOG" id="COG0542">
    <property type="taxonomic scope" value="Bacteria"/>
</dbReference>
<dbReference type="HOGENOM" id="CLU_005070_4_2_12"/>
<dbReference type="OrthoDB" id="9803641at2"/>
<dbReference type="Proteomes" id="UP000008212">
    <property type="component" value="Chromosome"/>
</dbReference>
<dbReference type="GO" id="GO:0005737">
    <property type="term" value="C:cytoplasm"/>
    <property type="evidence" value="ECO:0007669"/>
    <property type="project" value="UniProtKB-SubCell"/>
</dbReference>
<dbReference type="GO" id="GO:0005524">
    <property type="term" value="F:ATP binding"/>
    <property type="evidence" value="ECO:0007669"/>
    <property type="project" value="UniProtKB-KW"/>
</dbReference>
<dbReference type="GO" id="GO:0016887">
    <property type="term" value="F:ATP hydrolysis activity"/>
    <property type="evidence" value="ECO:0007669"/>
    <property type="project" value="InterPro"/>
</dbReference>
<dbReference type="GO" id="GO:0034605">
    <property type="term" value="P:cellular response to heat"/>
    <property type="evidence" value="ECO:0007669"/>
    <property type="project" value="TreeGrafter"/>
</dbReference>
<dbReference type="GO" id="GO:0042026">
    <property type="term" value="P:protein refolding"/>
    <property type="evidence" value="ECO:0007669"/>
    <property type="project" value="InterPro"/>
</dbReference>
<dbReference type="CDD" id="cd00009">
    <property type="entry name" value="AAA"/>
    <property type="match status" value="1"/>
</dbReference>
<dbReference type="CDD" id="cd19499">
    <property type="entry name" value="RecA-like_ClpB_Hsp104-like"/>
    <property type="match status" value="1"/>
</dbReference>
<dbReference type="FunFam" id="1.10.8.60:FF:000017">
    <property type="entry name" value="ATP-dependent chaperone ClpB"/>
    <property type="match status" value="1"/>
</dbReference>
<dbReference type="FunFam" id="3.40.50.300:FF:000120">
    <property type="entry name" value="ATP-dependent chaperone ClpB"/>
    <property type="match status" value="1"/>
</dbReference>
<dbReference type="FunFam" id="3.40.50.300:FF:000025">
    <property type="entry name" value="ATP-dependent Clp protease subunit"/>
    <property type="match status" value="1"/>
</dbReference>
<dbReference type="FunFam" id="3.40.50.300:FF:000010">
    <property type="entry name" value="Chaperone clpB 1, putative"/>
    <property type="match status" value="1"/>
</dbReference>
<dbReference type="Gene3D" id="1.10.8.60">
    <property type="match status" value="1"/>
</dbReference>
<dbReference type="Gene3D" id="1.10.1780.10">
    <property type="entry name" value="Clp, N-terminal domain"/>
    <property type="match status" value="1"/>
</dbReference>
<dbReference type="Gene3D" id="3.40.50.300">
    <property type="entry name" value="P-loop containing nucleotide triphosphate hydrolases"/>
    <property type="match status" value="3"/>
</dbReference>
<dbReference type="InterPro" id="IPR003593">
    <property type="entry name" value="AAA+_ATPase"/>
</dbReference>
<dbReference type="InterPro" id="IPR003959">
    <property type="entry name" value="ATPase_AAA_core"/>
</dbReference>
<dbReference type="InterPro" id="IPR017730">
    <property type="entry name" value="Chaperonin_ClpB"/>
</dbReference>
<dbReference type="InterPro" id="IPR019489">
    <property type="entry name" value="Clp_ATPase_C"/>
</dbReference>
<dbReference type="InterPro" id="IPR036628">
    <property type="entry name" value="Clp_N_dom_sf"/>
</dbReference>
<dbReference type="InterPro" id="IPR004176">
    <property type="entry name" value="Clp_R_dom"/>
</dbReference>
<dbReference type="InterPro" id="IPR001270">
    <property type="entry name" value="ClpA/B"/>
</dbReference>
<dbReference type="InterPro" id="IPR018368">
    <property type="entry name" value="ClpA/B_CS1"/>
</dbReference>
<dbReference type="InterPro" id="IPR028299">
    <property type="entry name" value="ClpA/B_CS2"/>
</dbReference>
<dbReference type="InterPro" id="IPR041546">
    <property type="entry name" value="ClpA/ClpB_AAA_lid"/>
</dbReference>
<dbReference type="InterPro" id="IPR050130">
    <property type="entry name" value="ClpA_ClpB"/>
</dbReference>
<dbReference type="InterPro" id="IPR027417">
    <property type="entry name" value="P-loop_NTPase"/>
</dbReference>
<dbReference type="NCBIfam" id="TIGR03346">
    <property type="entry name" value="chaperone_ClpB"/>
    <property type="match status" value="1"/>
</dbReference>
<dbReference type="PANTHER" id="PTHR11638">
    <property type="entry name" value="ATP-DEPENDENT CLP PROTEASE"/>
    <property type="match status" value="1"/>
</dbReference>
<dbReference type="PANTHER" id="PTHR11638:SF18">
    <property type="entry name" value="HEAT SHOCK PROTEIN 104"/>
    <property type="match status" value="1"/>
</dbReference>
<dbReference type="Pfam" id="PF00004">
    <property type="entry name" value="AAA"/>
    <property type="match status" value="1"/>
</dbReference>
<dbReference type="Pfam" id="PF07724">
    <property type="entry name" value="AAA_2"/>
    <property type="match status" value="1"/>
</dbReference>
<dbReference type="Pfam" id="PF17871">
    <property type="entry name" value="AAA_lid_9"/>
    <property type="match status" value="1"/>
</dbReference>
<dbReference type="Pfam" id="PF02861">
    <property type="entry name" value="Clp_N"/>
    <property type="match status" value="2"/>
</dbReference>
<dbReference type="Pfam" id="PF10431">
    <property type="entry name" value="ClpB_D2-small"/>
    <property type="match status" value="1"/>
</dbReference>
<dbReference type="PRINTS" id="PR00300">
    <property type="entry name" value="CLPPROTEASEA"/>
</dbReference>
<dbReference type="SMART" id="SM00382">
    <property type="entry name" value="AAA"/>
    <property type="match status" value="2"/>
</dbReference>
<dbReference type="SMART" id="SM01086">
    <property type="entry name" value="ClpB_D2-small"/>
    <property type="match status" value="1"/>
</dbReference>
<dbReference type="SUPFAM" id="SSF81923">
    <property type="entry name" value="Double Clp-N motif"/>
    <property type="match status" value="1"/>
</dbReference>
<dbReference type="SUPFAM" id="SSF52540">
    <property type="entry name" value="P-loop containing nucleoside triphosphate hydrolases"/>
    <property type="match status" value="2"/>
</dbReference>
<dbReference type="PROSITE" id="PS51903">
    <property type="entry name" value="CLP_R"/>
    <property type="match status" value="1"/>
</dbReference>
<dbReference type="PROSITE" id="PS00870">
    <property type="entry name" value="CLPAB_1"/>
    <property type="match status" value="1"/>
</dbReference>
<dbReference type="PROSITE" id="PS00871">
    <property type="entry name" value="CLPAB_2"/>
    <property type="match status" value="1"/>
</dbReference>
<comment type="function">
    <text evidence="1">Part of a stress-induced multi-chaperone system, it is involved in the recovery of the cell from heat-induced damage, in cooperation with DnaK, DnaJ and GrpE. Acts before DnaK, in the processing of protein aggregates. Protein binding stimulates the ATPase activity; ATP hydrolysis unfolds the denatured protein aggregates, which probably helps expose new hydrophobic binding sites on the surface of ClpB-bound aggregates, contributing to the solubilization and refolding of denatured protein aggregates by DnaK (By similarity).</text>
</comment>
<comment type="subunit">
    <text evidence="1">Homohexamer. The oligomerization is ATP-dependent (By similarity).</text>
</comment>
<comment type="subcellular location">
    <subcellularLocation>
        <location evidence="3">Cytoplasm</location>
    </subcellularLocation>
</comment>
<comment type="domain">
    <text evidence="1">The Clp repeat (R) domain probably functions as a substrate-discriminating domain, recruiting aggregated proteins to the ClpB hexamer and/or stabilizing bound proteins. The NBD2 domain is responsible for oligomerization, whereas the NBD1 domain stabilizes the hexamer probably in an ATP-dependent manner. The movement of the coiled-coil domain is essential for ClpB ability to rescue proteins from an aggregated state, probably by pulling apart large aggregated proteins, which are bound between the coiled-coils motifs of adjacent ClpB subunits in the functional hexamer (By similarity).</text>
</comment>
<comment type="similarity">
    <text evidence="3">Belongs to the ClpA/ClpB family.</text>
</comment>
<accession>Q73K92</accession>
<reference key="1">
    <citation type="journal article" date="2004" name="Proc. Natl. Acad. Sci. U.S.A.">
        <title>Comparison of the genome of the oral pathogen Treponema denticola with other spirochete genomes.</title>
        <authorList>
            <person name="Seshadri R."/>
            <person name="Myers G.S.A."/>
            <person name="Tettelin H."/>
            <person name="Eisen J.A."/>
            <person name="Heidelberg J.F."/>
            <person name="Dodson R.J."/>
            <person name="Davidsen T.M."/>
            <person name="DeBoy R.T."/>
            <person name="Fouts D.E."/>
            <person name="Haft D.H."/>
            <person name="Selengut J."/>
            <person name="Ren Q."/>
            <person name="Brinkac L.M."/>
            <person name="Madupu R."/>
            <person name="Kolonay J.F."/>
            <person name="Durkin S.A."/>
            <person name="Daugherty S.C."/>
            <person name="Shetty J."/>
            <person name="Shvartsbeyn A."/>
            <person name="Gebregeorgis E."/>
            <person name="Geer K."/>
            <person name="Tsegaye G."/>
            <person name="Malek J.A."/>
            <person name="Ayodeji B."/>
            <person name="Shatsman S."/>
            <person name="McLeod M.P."/>
            <person name="Smajs D."/>
            <person name="Howell J.K."/>
            <person name="Pal S."/>
            <person name="Amin A."/>
            <person name="Vashisth P."/>
            <person name="McNeill T.Z."/>
            <person name="Xiang Q."/>
            <person name="Sodergren E."/>
            <person name="Baca E."/>
            <person name="Weinstock G.M."/>
            <person name="Norris S.J."/>
            <person name="Fraser C.M."/>
            <person name="Paulsen I.T."/>
        </authorList>
    </citation>
    <scope>NUCLEOTIDE SEQUENCE [LARGE SCALE GENOMIC DNA]</scope>
    <source>
        <strain>ATCC 35405 / DSM 14222 / CIP 103919 / JCM 8153 / KCTC 15104</strain>
    </source>
</reference>
<protein>
    <recommendedName>
        <fullName>Chaperone protein ClpB</fullName>
    </recommendedName>
</protein>
<proteinExistence type="inferred from homology"/>
<name>CLPB_TREDE</name>
<feature type="chain" id="PRO_0000191196" description="Chaperone protein ClpB">
    <location>
        <begin position="1"/>
        <end position="859"/>
    </location>
</feature>
<feature type="domain" description="Clp R" evidence="2">
    <location>
        <begin position="3"/>
        <end position="146"/>
    </location>
</feature>
<feature type="region of interest" description="Repeat 1" evidence="2">
    <location>
        <begin position="6"/>
        <end position="71"/>
    </location>
</feature>
<feature type="region of interest" description="Repeat 2" evidence="2">
    <location>
        <begin position="83"/>
        <end position="146"/>
    </location>
</feature>
<feature type="region of interest" description="NBD1" evidence="1">
    <location>
        <begin position="159"/>
        <end position="340"/>
    </location>
</feature>
<feature type="region of interest" description="Linker" evidence="1">
    <location>
        <begin position="341"/>
        <end position="549"/>
    </location>
</feature>
<feature type="region of interest" description="NBD2" evidence="1">
    <location>
        <begin position="559"/>
        <end position="766"/>
    </location>
</feature>
<feature type="region of interest" description="C-terminal" evidence="1">
    <location>
        <begin position="767"/>
        <end position="859"/>
    </location>
</feature>
<feature type="coiled-coil region" evidence="1">
    <location>
        <begin position="391"/>
        <end position="525"/>
    </location>
</feature>
<feature type="binding site" evidence="1">
    <location>
        <begin position="206"/>
        <end position="213"/>
    </location>
    <ligand>
        <name>ATP</name>
        <dbReference type="ChEBI" id="CHEBI:30616"/>
        <label>1</label>
    </ligand>
</feature>
<feature type="binding site" evidence="1">
    <location>
        <begin position="609"/>
        <end position="616"/>
    </location>
    <ligand>
        <name>ATP</name>
        <dbReference type="ChEBI" id="CHEBI:30616"/>
        <label>2</label>
    </ligand>
</feature>